<name>ASCD_YERPE</name>
<evidence type="ECO:0000250" key="1"/>
<evidence type="ECO:0000255" key="2">
    <source>
        <dbReference type="PROSITE-ProRule" id="PRU00465"/>
    </source>
</evidence>
<evidence type="ECO:0000255" key="3">
    <source>
        <dbReference type="PROSITE-ProRule" id="PRU00716"/>
    </source>
</evidence>
<protein>
    <recommendedName>
        <fullName>CDP-6-deoxy-L-threo-D-glycero-4-hexulose-3-dehydrase reductase</fullName>
        <ecNumber>1.17.1.-</ecNumber>
    </recommendedName>
    <alternativeName>
        <fullName>CDP-6-deoxy-delta-3,4-glucoseen reductase</fullName>
        <shortName>E3</shortName>
    </alternativeName>
</protein>
<feature type="initiator methionine" description="Removed" evidence="1">
    <location>
        <position position="1"/>
    </location>
</feature>
<feature type="chain" id="PRO_0000189393" description="CDP-6-deoxy-L-threo-D-glycero-4-hexulose-3-dehydrase reductase">
    <location>
        <begin position="2"/>
        <end position="329"/>
    </location>
</feature>
<feature type="domain" description="2Fe-2S ferredoxin-type" evidence="2">
    <location>
        <begin position="2"/>
        <end position="93"/>
    </location>
</feature>
<feature type="domain" description="FAD-binding FR-type" evidence="3">
    <location>
        <begin position="98"/>
        <end position="197"/>
    </location>
</feature>
<feature type="binding site" evidence="2">
    <location>
        <position position="37"/>
    </location>
    <ligand>
        <name>[2Fe-2S] cluster</name>
        <dbReference type="ChEBI" id="CHEBI:190135"/>
    </ligand>
</feature>
<feature type="binding site" evidence="2">
    <location>
        <position position="42"/>
    </location>
    <ligand>
        <name>[2Fe-2S] cluster</name>
        <dbReference type="ChEBI" id="CHEBI:190135"/>
    </ligand>
</feature>
<feature type="binding site" evidence="2">
    <location>
        <position position="45"/>
    </location>
    <ligand>
        <name>[2Fe-2S] cluster</name>
        <dbReference type="ChEBI" id="CHEBI:190135"/>
    </ligand>
</feature>
<feature type="binding site" evidence="2">
    <location>
        <position position="75"/>
    </location>
    <ligand>
        <name>[2Fe-2S] cluster</name>
        <dbReference type="ChEBI" id="CHEBI:190135"/>
    </ligand>
</feature>
<dbReference type="EC" id="1.17.1.-"/>
<dbReference type="EMBL" id="AJ251713">
    <property type="protein sequence ID" value="CAB63270.1"/>
    <property type="molecule type" value="Genomic_DNA"/>
</dbReference>
<dbReference type="EMBL" id="AL590842">
    <property type="protein sequence ID" value="CAL21712.1"/>
    <property type="molecule type" value="Genomic_DNA"/>
</dbReference>
<dbReference type="EMBL" id="AE009952">
    <property type="protein sequence ID" value="AAM84648.1"/>
    <property type="molecule type" value="Genomic_DNA"/>
</dbReference>
<dbReference type="EMBL" id="AE017042">
    <property type="protein sequence ID" value="AAS61079.1"/>
    <property type="molecule type" value="Genomic_DNA"/>
</dbReference>
<dbReference type="PIR" id="AE0378">
    <property type="entry name" value="AE0378"/>
</dbReference>
<dbReference type="RefSeq" id="WP_002208598.1">
    <property type="nucleotide sequence ID" value="NZ_WUCM01000009.1"/>
</dbReference>
<dbReference type="RefSeq" id="YP_002348024.1">
    <property type="nucleotide sequence ID" value="NC_003143.1"/>
</dbReference>
<dbReference type="SMR" id="P68641"/>
<dbReference type="STRING" id="214092.YPO3116"/>
<dbReference type="PaxDb" id="214092-YPO3116"/>
<dbReference type="DNASU" id="1146014"/>
<dbReference type="EnsemblBacteria" id="AAS61079">
    <property type="protein sequence ID" value="AAS61079"/>
    <property type="gene ID" value="YP_0814"/>
</dbReference>
<dbReference type="KEGG" id="ype:YPO3116"/>
<dbReference type="KEGG" id="ypk:y1067"/>
<dbReference type="KEGG" id="ypm:YP_0814"/>
<dbReference type="PATRIC" id="fig|214092.21.peg.3571"/>
<dbReference type="eggNOG" id="COG0543">
    <property type="taxonomic scope" value="Bacteria"/>
</dbReference>
<dbReference type="eggNOG" id="COG1018">
    <property type="taxonomic scope" value="Bacteria"/>
</dbReference>
<dbReference type="HOGENOM" id="CLU_003827_7_0_6"/>
<dbReference type="OMA" id="IGLPYGC"/>
<dbReference type="OrthoDB" id="9801155at2"/>
<dbReference type="UniPathway" id="UPA00030"/>
<dbReference type="UniPathway" id="UPA00818"/>
<dbReference type="Proteomes" id="UP000000815">
    <property type="component" value="Chromosome"/>
</dbReference>
<dbReference type="Proteomes" id="UP000001019">
    <property type="component" value="Chromosome"/>
</dbReference>
<dbReference type="Proteomes" id="UP000002490">
    <property type="component" value="Chromosome"/>
</dbReference>
<dbReference type="GO" id="GO:0051537">
    <property type="term" value="F:2 iron, 2 sulfur cluster binding"/>
    <property type="evidence" value="ECO:0007669"/>
    <property type="project" value="UniProtKB-KW"/>
</dbReference>
<dbReference type="GO" id="GO:0046872">
    <property type="term" value="F:metal ion binding"/>
    <property type="evidence" value="ECO:0007669"/>
    <property type="project" value="UniProtKB-KW"/>
</dbReference>
<dbReference type="GO" id="GO:0016491">
    <property type="term" value="F:oxidoreductase activity"/>
    <property type="evidence" value="ECO:0000318"/>
    <property type="project" value="GO_Central"/>
</dbReference>
<dbReference type="GO" id="GO:0009103">
    <property type="term" value="P:lipopolysaccharide biosynthetic process"/>
    <property type="evidence" value="ECO:0007669"/>
    <property type="project" value="UniProtKB-UniPathway"/>
</dbReference>
<dbReference type="CDD" id="cd00207">
    <property type="entry name" value="fer2"/>
    <property type="match status" value="1"/>
</dbReference>
<dbReference type="CDD" id="cd06189">
    <property type="entry name" value="flavin_oxioreductase"/>
    <property type="match status" value="1"/>
</dbReference>
<dbReference type="Gene3D" id="3.10.20.30">
    <property type="match status" value="1"/>
</dbReference>
<dbReference type="Gene3D" id="3.40.50.80">
    <property type="entry name" value="Nucleotide-binding domain of ferredoxin-NADP reductase (FNR) module"/>
    <property type="match status" value="1"/>
</dbReference>
<dbReference type="Gene3D" id="2.40.30.10">
    <property type="entry name" value="Translation factors"/>
    <property type="match status" value="1"/>
</dbReference>
<dbReference type="InterPro" id="IPR036010">
    <property type="entry name" value="2Fe-2S_ferredoxin-like_sf"/>
</dbReference>
<dbReference type="InterPro" id="IPR001041">
    <property type="entry name" value="2Fe-2S_ferredoxin-type"/>
</dbReference>
<dbReference type="InterPro" id="IPR006058">
    <property type="entry name" value="2Fe2S_fd_BS"/>
</dbReference>
<dbReference type="InterPro" id="IPR012675">
    <property type="entry name" value="Beta-grasp_dom_sf"/>
</dbReference>
<dbReference type="InterPro" id="IPR008333">
    <property type="entry name" value="Cbr1-like_FAD-bd_dom"/>
</dbReference>
<dbReference type="InterPro" id="IPR017927">
    <property type="entry name" value="FAD-bd_FR_type"/>
</dbReference>
<dbReference type="InterPro" id="IPR039261">
    <property type="entry name" value="FNR_nucleotide-bd"/>
</dbReference>
<dbReference type="InterPro" id="IPR050415">
    <property type="entry name" value="MRET"/>
</dbReference>
<dbReference type="InterPro" id="IPR001433">
    <property type="entry name" value="OxRdtase_FAD/NAD-bd"/>
</dbReference>
<dbReference type="InterPro" id="IPR017938">
    <property type="entry name" value="Riboflavin_synthase-like_b-brl"/>
</dbReference>
<dbReference type="PANTHER" id="PTHR47354">
    <property type="entry name" value="NADH OXIDOREDUCTASE HCR"/>
    <property type="match status" value="1"/>
</dbReference>
<dbReference type="PANTHER" id="PTHR47354:SF5">
    <property type="entry name" value="PROTEIN RFBI"/>
    <property type="match status" value="1"/>
</dbReference>
<dbReference type="Pfam" id="PF00970">
    <property type="entry name" value="FAD_binding_6"/>
    <property type="match status" value="1"/>
</dbReference>
<dbReference type="Pfam" id="PF00111">
    <property type="entry name" value="Fer2"/>
    <property type="match status" value="1"/>
</dbReference>
<dbReference type="Pfam" id="PF00175">
    <property type="entry name" value="NAD_binding_1"/>
    <property type="match status" value="1"/>
</dbReference>
<dbReference type="PRINTS" id="PR00410">
    <property type="entry name" value="PHEHYDRXLASE"/>
</dbReference>
<dbReference type="SUPFAM" id="SSF54292">
    <property type="entry name" value="2Fe-2S ferredoxin-like"/>
    <property type="match status" value="1"/>
</dbReference>
<dbReference type="SUPFAM" id="SSF52343">
    <property type="entry name" value="Ferredoxin reductase-like, C-terminal NADP-linked domain"/>
    <property type="match status" value="1"/>
</dbReference>
<dbReference type="SUPFAM" id="SSF63380">
    <property type="entry name" value="Riboflavin synthase domain-like"/>
    <property type="match status" value="1"/>
</dbReference>
<dbReference type="PROSITE" id="PS00197">
    <property type="entry name" value="2FE2S_FER_1"/>
    <property type="match status" value="1"/>
</dbReference>
<dbReference type="PROSITE" id="PS51085">
    <property type="entry name" value="2FE2S_FER_2"/>
    <property type="match status" value="1"/>
</dbReference>
<dbReference type="PROSITE" id="PS51384">
    <property type="entry name" value="FAD_FR"/>
    <property type="match status" value="1"/>
</dbReference>
<proteinExistence type="inferred from homology"/>
<comment type="function">
    <text evidence="1">Participates in the conversion of CDP-6-deoxy-D-glycero-L-threo-4-hexulose to 3,6-dideoxy-D-glycero-D-glycero-4-hexulose together with CDP-6-deoxy-D-glycero-L-threo-4-hexulose-3-dehydrase (E1) in two consecutive steps. The detailed mechanism of E3 is not yet resolved (By similarity).</text>
</comment>
<comment type="pathway">
    <text>Nucleotide-sugar biosynthesis; CDP-ascarylose biosynthesis.</text>
</comment>
<comment type="pathway">
    <text>Bacterial outer membrane biogenesis; lipopolysaccharide biosynthesis.</text>
</comment>
<comment type="subunit">
    <text evidence="1">Monomer.</text>
</comment>
<keyword id="KW-0001">2Fe-2S</keyword>
<keyword id="KW-0249">Electron transport</keyword>
<keyword id="KW-0408">Iron</keyword>
<keyword id="KW-0411">Iron-sulfur</keyword>
<keyword id="KW-0479">Metal-binding</keyword>
<keyword id="KW-0520">NAD</keyword>
<keyword id="KW-0560">Oxidoreductase</keyword>
<keyword id="KW-1185">Reference proteome</keyword>
<keyword id="KW-0813">Transport</keyword>
<accession>P68641</accession>
<accession>P37911</accession>
<accession>Q7B0V7</accession>
<reference key="1">
    <citation type="journal article" date="2000" name="Mol. Microbiol.">
        <title>Characterization of the O-antigen gene clusters of Yersinia pseudotuberculosis and the cryptic O-antigen gene cluster of Yersinia pestis shows that the plague bacillus is most closely related to and has evolved from Y. pseudotuberculosis serotype O:1b.</title>
        <authorList>
            <person name="Skurnik M."/>
            <person name="Peippo A."/>
            <person name="Ervela E."/>
        </authorList>
    </citation>
    <scope>NUCLEOTIDE SEQUENCE [GENOMIC DNA]</scope>
    <source>
        <strain>EV 76</strain>
    </source>
</reference>
<reference key="2">
    <citation type="journal article" date="2001" name="Nature">
        <title>Genome sequence of Yersinia pestis, the causative agent of plague.</title>
        <authorList>
            <person name="Parkhill J."/>
            <person name="Wren B.W."/>
            <person name="Thomson N.R."/>
            <person name="Titball R.W."/>
            <person name="Holden M.T.G."/>
            <person name="Prentice M.B."/>
            <person name="Sebaihia M."/>
            <person name="James K.D."/>
            <person name="Churcher C.M."/>
            <person name="Mungall K.L."/>
            <person name="Baker S."/>
            <person name="Basham D."/>
            <person name="Bentley S.D."/>
            <person name="Brooks K."/>
            <person name="Cerdeno-Tarraga A.-M."/>
            <person name="Chillingworth T."/>
            <person name="Cronin A."/>
            <person name="Davies R.M."/>
            <person name="Davis P."/>
            <person name="Dougan G."/>
            <person name="Feltwell T."/>
            <person name="Hamlin N."/>
            <person name="Holroyd S."/>
            <person name="Jagels K."/>
            <person name="Karlyshev A.V."/>
            <person name="Leather S."/>
            <person name="Moule S."/>
            <person name="Oyston P.C.F."/>
            <person name="Quail M.A."/>
            <person name="Rutherford K.M."/>
            <person name="Simmonds M."/>
            <person name="Skelton J."/>
            <person name="Stevens K."/>
            <person name="Whitehead S."/>
            <person name="Barrell B.G."/>
        </authorList>
    </citation>
    <scope>NUCLEOTIDE SEQUENCE [LARGE SCALE GENOMIC DNA]</scope>
    <source>
        <strain>CO-92 / Biovar Orientalis</strain>
    </source>
</reference>
<reference key="3">
    <citation type="journal article" date="2002" name="J. Bacteriol.">
        <title>Genome sequence of Yersinia pestis KIM.</title>
        <authorList>
            <person name="Deng W."/>
            <person name="Burland V."/>
            <person name="Plunkett G. III"/>
            <person name="Boutin A."/>
            <person name="Mayhew G.F."/>
            <person name="Liss P."/>
            <person name="Perna N.T."/>
            <person name="Rose D.J."/>
            <person name="Mau B."/>
            <person name="Zhou S."/>
            <person name="Schwartz D.C."/>
            <person name="Fetherston J.D."/>
            <person name="Lindler L.E."/>
            <person name="Brubaker R.R."/>
            <person name="Plano G.V."/>
            <person name="Straley S.C."/>
            <person name="McDonough K.A."/>
            <person name="Nilles M.L."/>
            <person name="Matson J.S."/>
            <person name="Blattner F.R."/>
            <person name="Perry R.D."/>
        </authorList>
    </citation>
    <scope>NUCLEOTIDE SEQUENCE [LARGE SCALE GENOMIC DNA]</scope>
    <source>
        <strain>KIM10+ / Biovar Mediaevalis</strain>
    </source>
</reference>
<reference key="4">
    <citation type="journal article" date="2004" name="DNA Res.">
        <title>Complete genome sequence of Yersinia pestis strain 91001, an isolate avirulent to humans.</title>
        <authorList>
            <person name="Song Y."/>
            <person name="Tong Z."/>
            <person name="Wang J."/>
            <person name="Wang L."/>
            <person name="Guo Z."/>
            <person name="Han Y."/>
            <person name="Zhang J."/>
            <person name="Pei D."/>
            <person name="Zhou D."/>
            <person name="Qin H."/>
            <person name="Pang X."/>
            <person name="Han Y."/>
            <person name="Zhai J."/>
            <person name="Li M."/>
            <person name="Cui B."/>
            <person name="Qi Z."/>
            <person name="Jin L."/>
            <person name="Dai R."/>
            <person name="Chen F."/>
            <person name="Li S."/>
            <person name="Ye C."/>
            <person name="Du Z."/>
            <person name="Lin W."/>
            <person name="Wang J."/>
            <person name="Yu J."/>
            <person name="Yang H."/>
            <person name="Wang J."/>
            <person name="Huang P."/>
            <person name="Yang R."/>
        </authorList>
    </citation>
    <scope>NUCLEOTIDE SEQUENCE [LARGE SCALE GENOMIC DNA]</scope>
    <source>
        <strain>91001 / Biovar Mediaevalis</strain>
    </source>
</reference>
<organism>
    <name type="scientific">Yersinia pestis</name>
    <dbReference type="NCBI Taxonomy" id="632"/>
    <lineage>
        <taxon>Bacteria</taxon>
        <taxon>Pseudomonadati</taxon>
        <taxon>Pseudomonadota</taxon>
        <taxon>Gammaproteobacteria</taxon>
        <taxon>Enterobacterales</taxon>
        <taxon>Yersiniaceae</taxon>
        <taxon>Yersinia</taxon>
    </lineage>
</organism>
<sequence>MSLNVKLHPSGIIFTSDGTSTILDAALDSNIHIEYSCKDGTCGSCKAILISGEVDSAENTFLTEEDVAKGAILTCCSKAKSDIELDVNYYPELSHIQKKTYPCKLDSIEFIGEDIAILSLRLPPTAKIQYLAGQYIDLIINGQRRSYSIANAPGGNGNIELHVRKVVNGVFSNIIFNELKLQQLLRIEGPQGTFFVREDNLPIVFLAGGTGFAPVKSMVEALINKNDQRQVHIYWGMPAGHNFYSDIANEWAIKHPNIHYVPVVSGDDSTWTGATGFVHQAVLEDIPDLSLFNVYACGSLAMITAARNDFINHGLAENKFFSDAFVPSK</sequence>
<gene>
    <name type="primary">ascD</name>
    <name type="synonym">ddhD</name>
    <name type="synonym">rfbI</name>
    <name type="ordered locus">YPO3116</name>
    <name type="ordered locus">y1067</name>
    <name type="ordered locus">YP_0814</name>
</gene>